<comment type="function">
    <text evidence="1 4">Snake venom phospholipase A2 homolog that lacks catalytic activity (PubMed:12959640). It shows myotoxic and weak anticoagulant activities (PubMed:12959640). A model of myotoxic mechanism has been proposed: an apo Lys49-PLA2 is activated by the entrance of a hydrophobic molecule (e.g. fatty acid) at the hydrophobic channel of the protein leading to a reorientation of a monomer (By similarity). This reorientation causes a transition between 'inactive' to 'active' states, causing alignment of C-terminal and membrane-docking sites (MDoS) side-by-side and putting the membrane-disruption sites (MDiS) in the same plane, exposed to solvent and in a symmetric position for both monomers (By similarity). The MDoS region stabilizes the toxin on membrane by the interaction of charged residues with phospholipid head groups (By similarity). Subsequently, the MDiS region destabilizes the membrane with penetration of hydrophobic residues (By similarity). This insertion causes a disorganization of the membrane, allowing an uncontrolled influx of ions (i.e. calcium and sodium), and eventually triggering irreversible intracellular alterations and cell death (By similarity).</text>
</comment>
<comment type="subcellular location">
    <subcellularLocation>
        <location evidence="4">Secreted</location>
    </subcellularLocation>
</comment>
<comment type="tissue specificity">
    <text evidence="7">Expressed by the venom gland.</text>
</comment>
<comment type="mass spectrometry" mass="13931.0" method="Electrospray" evidence="4"/>
<comment type="similarity">
    <text evidence="6">Belongs to the phospholipase A2 family. Group II subfamily. K49 sub-subfamily.</text>
</comment>
<comment type="caution">
    <text evidence="6">Does not bind calcium as one of the calcium-binding sites is lost (Asp-&gt;Lys in position 64, which corresponds to 'Lys-49' in the current nomenclature).</text>
</comment>
<organism>
    <name type="scientific">Trimeresurus stejnegeri</name>
    <name type="common">Chinese green tree viper</name>
    <name type="synonym">Viridovipera stejnegeri</name>
    <dbReference type="NCBI Taxonomy" id="39682"/>
    <lineage>
        <taxon>Eukaryota</taxon>
        <taxon>Metazoa</taxon>
        <taxon>Chordata</taxon>
        <taxon>Craniata</taxon>
        <taxon>Vertebrata</taxon>
        <taxon>Euteleostomi</taxon>
        <taxon>Lepidosauria</taxon>
        <taxon>Squamata</taxon>
        <taxon>Bifurcata</taxon>
        <taxon>Unidentata</taxon>
        <taxon>Episquamata</taxon>
        <taxon>Toxicofera</taxon>
        <taxon>Serpentes</taxon>
        <taxon>Colubroidea</taxon>
        <taxon>Viperidae</taxon>
        <taxon>Crotalinae</taxon>
        <taxon>Trimeresurus</taxon>
    </lineage>
</organism>
<reference key="1">
    <citation type="journal article" date="2004" name="Biochem. J.">
        <title>Venom phospholipases A2 of bamboo viper (Trimeresurus stejnegeri): molecular characterization, geographic variations and evidence of multiple ancestries.</title>
        <authorList>
            <person name="Tsai I.-H."/>
            <person name="Wang Y.-M."/>
            <person name="Chen Y.-H."/>
            <person name="Tsai T.-S."/>
            <person name="Tu M.-C."/>
        </authorList>
    </citation>
    <scope>NUCLEOTIDE SEQUENCE [MRNA]</scope>
    <scope>PROTEIN SEQUENCE OF 17-39</scope>
    <scope>FUNCTION</scope>
    <scope>MASS SPECTROMETRY</scope>
    <scope>SUBCELLULAR LOCATION</scope>
    <source>
        <strain>Taiwan</strain>
        <tissue>Venom</tissue>
        <tissue>Venom gland</tissue>
    </source>
</reference>
<dbReference type="EMBL" id="AY211937">
    <property type="protein sequence ID" value="AAP48895.1"/>
    <property type="molecule type" value="mRNA"/>
</dbReference>
<dbReference type="SMR" id="Q6H3D2"/>
<dbReference type="GO" id="GO:0005576">
    <property type="term" value="C:extracellular region"/>
    <property type="evidence" value="ECO:0007669"/>
    <property type="project" value="UniProtKB-SubCell"/>
</dbReference>
<dbReference type="GO" id="GO:0005509">
    <property type="term" value="F:calcium ion binding"/>
    <property type="evidence" value="ECO:0007669"/>
    <property type="project" value="InterPro"/>
</dbReference>
<dbReference type="GO" id="GO:0047498">
    <property type="term" value="F:calcium-dependent phospholipase A2 activity"/>
    <property type="evidence" value="ECO:0007669"/>
    <property type="project" value="TreeGrafter"/>
</dbReference>
<dbReference type="GO" id="GO:0005543">
    <property type="term" value="F:phospholipid binding"/>
    <property type="evidence" value="ECO:0007669"/>
    <property type="project" value="TreeGrafter"/>
</dbReference>
<dbReference type="GO" id="GO:0090729">
    <property type="term" value="F:toxin activity"/>
    <property type="evidence" value="ECO:0007669"/>
    <property type="project" value="UniProtKB-KW"/>
</dbReference>
<dbReference type="GO" id="GO:0050482">
    <property type="term" value="P:arachidonate secretion"/>
    <property type="evidence" value="ECO:0007669"/>
    <property type="project" value="InterPro"/>
</dbReference>
<dbReference type="GO" id="GO:0016042">
    <property type="term" value="P:lipid catabolic process"/>
    <property type="evidence" value="ECO:0007669"/>
    <property type="project" value="InterPro"/>
</dbReference>
<dbReference type="GO" id="GO:0042130">
    <property type="term" value="P:negative regulation of T cell proliferation"/>
    <property type="evidence" value="ECO:0007669"/>
    <property type="project" value="TreeGrafter"/>
</dbReference>
<dbReference type="GO" id="GO:0006644">
    <property type="term" value="P:phospholipid metabolic process"/>
    <property type="evidence" value="ECO:0007669"/>
    <property type="project" value="InterPro"/>
</dbReference>
<dbReference type="CDD" id="cd00125">
    <property type="entry name" value="PLA2c"/>
    <property type="match status" value="1"/>
</dbReference>
<dbReference type="FunFam" id="1.20.90.10:FF:000001">
    <property type="entry name" value="Basic phospholipase A2 homolog"/>
    <property type="match status" value="1"/>
</dbReference>
<dbReference type="Gene3D" id="1.20.90.10">
    <property type="entry name" value="Phospholipase A2 domain"/>
    <property type="match status" value="1"/>
</dbReference>
<dbReference type="InterPro" id="IPR001211">
    <property type="entry name" value="PLipase_A2"/>
</dbReference>
<dbReference type="InterPro" id="IPR016090">
    <property type="entry name" value="PLipase_A2_dom"/>
</dbReference>
<dbReference type="InterPro" id="IPR036444">
    <property type="entry name" value="PLipase_A2_dom_sf"/>
</dbReference>
<dbReference type="InterPro" id="IPR033113">
    <property type="entry name" value="PLipase_A2_His_AS"/>
</dbReference>
<dbReference type="PANTHER" id="PTHR11716">
    <property type="entry name" value="PHOSPHOLIPASE A2 FAMILY MEMBER"/>
    <property type="match status" value="1"/>
</dbReference>
<dbReference type="PANTHER" id="PTHR11716:SF9">
    <property type="entry name" value="PHOSPHOLIPASE A2, MEMBRANE ASSOCIATED"/>
    <property type="match status" value="1"/>
</dbReference>
<dbReference type="Pfam" id="PF00068">
    <property type="entry name" value="Phospholip_A2_1"/>
    <property type="match status" value="1"/>
</dbReference>
<dbReference type="PRINTS" id="PR00389">
    <property type="entry name" value="PHPHLIPASEA2"/>
</dbReference>
<dbReference type="SMART" id="SM00085">
    <property type="entry name" value="PA2c"/>
    <property type="match status" value="1"/>
</dbReference>
<dbReference type="SUPFAM" id="SSF48619">
    <property type="entry name" value="Phospholipase A2, PLA2"/>
    <property type="match status" value="1"/>
</dbReference>
<dbReference type="PROSITE" id="PS00118">
    <property type="entry name" value="PA2_HIS"/>
    <property type="match status" value="1"/>
</dbReference>
<evidence type="ECO:0000250" key="1">
    <source>
        <dbReference type="UniProtKB" id="I6L8L6"/>
    </source>
</evidence>
<evidence type="ECO:0000250" key="2">
    <source>
        <dbReference type="UniProtKB" id="P24605"/>
    </source>
</evidence>
<evidence type="ECO:0000250" key="3">
    <source>
        <dbReference type="UniProtKB" id="Q90249"/>
    </source>
</evidence>
<evidence type="ECO:0000269" key="4">
    <source>
    </source>
</evidence>
<evidence type="ECO:0000303" key="5">
    <source>
    </source>
</evidence>
<evidence type="ECO:0000305" key="6"/>
<evidence type="ECO:0000305" key="7">
    <source>
    </source>
</evidence>
<feature type="signal peptide" evidence="4">
    <location>
        <begin position="1"/>
        <end position="16"/>
    </location>
</feature>
<feature type="chain" id="PRO_0000419079" description="Basic phospholipase A2 homolog Ts-K49b" evidence="7">
    <location>
        <begin position="17"/>
        <end position="138"/>
    </location>
</feature>
<feature type="region of interest" description="Important for membrane-damaging activities in eukaryotes and bacteria; heparin-binding" evidence="2">
    <location>
        <begin position="121"/>
        <end position="133"/>
    </location>
</feature>
<feature type="site" description="Important residue of the cationic membrane-docking site (MDoS)" evidence="1">
    <location>
        <position position="121"/>
    </location>
</feature>
<feature type="site" description="Important residue of the cationic membrane-docking site (MDoS)" evidence="1">
    <location>
        <position position="124"/>
    </location>
</feature>
<feature type="site" description="Hydrophobic membrane-disruption site (MDiS)" evidence="1">
    <location>
        <position position="127"/>
    </location>
</feature>
<feature type="site" description="Cationic membrane-docking site (MDoS)" evidence="1">
    <location>
        <position position="128"/>
    </location>
</feature>
<feature type="site" description="Hydrophobic membrane-disruption site (MDiS)" evidence="1">
    <location>
        <position position="130"/>
    </location>
</feature>
<feature type="site" description="Cationic membrane-docking site (MDoS)" evidence="1">
    <location>
        <position position="133"/>
    </location>
</feature>
<feature type="disulfide bond" evidence="3">
    <location>
        <begin position="42"/>
        <end position="131"/>
    </location>
</feature>
<feature type="disulfide bond" evidence="3">
    <location>
        <begin position="44"/>
        <end position="60"/>
    </location>
</feature>
<feature type="disulfide bond" evidence="3">
    <location>
        <begin position="65"/>
        <end position="138"/>
    </location>
</feature>
<feature type="disulfide bond" evidence="3">
    <location>
        <begin position="66"/>
        <end position="104"/>
    </location>
</feature>
<feature type="disulfide bond" evidence="3">
    <location>
        <begin position="73"/>
        <end position="97"/>
    </location>
</feature>
<feature type="disulfide bond" evidence="3">
    <location>
        <begin position="91"/>
        <end position="102"/>
    </location>
</feature>
<proteinExistence type="evidence at protein level"/>
<keyword id="KW-1203">Blood coagulation cascade inhibiting toxin</keyword>
<keyword id="KW-0903">Direct protein sequencing</keyword>
<keyword id="KW-1015">Disulfide bond</keyword>
<keyword id="KW-1199">Hemostasis impairing toxin</keyword>
<keyword id="KW-0959">Myotoxin</keyword>
<keyword id="KW-0964">Secreted</keyword>
<keyword id="KW-0732">Signal</keyword>
<keyword id="KW-0800">Toxin</keyword>
<name>PA2HF_TRIST</name>
<protein>
    <recommendedName>
        <fullName evidence="5">Basic phospholipase A2 homolog Ts-K49b</fullName>
        <shortName>svPLA2 homolog</shortName>
    </recommendedName>
</protein>
<sequence length="138" mass="15713">MRTLWIMAVLLVGVEGGVIELTKMFVQEMGKNALTSYSLYGCNCGPGGRRKPMDATDSCCHVHKCCYKKLTDCDPIKDRYSYSWVNKAIVCGEDNPCLKEMCECDKAVAIRFRENLDTYDKKKKINLKLFCKKTSEQC</sequence>
<accession>Q6H3D2</accession>